<reference evidence="6" key="1">
    <citation type="journal article" date="2009" name="PLoS Biol.">
        <title>Lineage-specific biology revealed by a finished genome assembly of the mouse.</title>
        <authorList>
            <person name="Church D.M."/>
            <person name="Goodstadt L."/>
            <person name="Hillier L.W."/>
            <person name="Zody M.C."/>
            <person name="Goldstein S."/>
            <person name="She X."/>
            <person name="Bult C.J."/>
            <person name="Agarwala R."/>
            <person name="Cherry J.L."/>
            <person name="DiCuccio M."/>
            <person name="Hlavina W."/>
            <person name="Kapustin Y."/>
            <person name="Meric P."/>
            <person name="Maglott D."/>
            <person name="Birtle Z."/>
            <person name="Marques A.C."/>
            <person name="Graves T."/>
            <person name="Zhou S."/>
            <person name="Teague B."/>
            <person name="Potamousis K."/>
            <person name="Churas C."/>
            <person name="Place M."/>
            <person name="Herschleb J."/>
            <person name="Runnheim R."/>
            <person name="Forrest D."/>
            <person name="Amos-Landgraf J."/>
            <person name="Schwartz D.C."/>
            <person name="Cheng Z."/>
            <person name="Lindblad-Toh K."/>
            <person name="Eichler E.E."/>
            <person name="Ponting C.P."/>
        </authorList>
    </citation>
    <scope>NUCLEOTIDE SEQUENCE [LARGE SCALE GENOMIC DNA]</scope>
    <source>
        <strain evidence="6">C57BL/6J</strain>
    </source>
</reference>
<reference key="2">
    <citation type="journal article" date="2021" name="Elife">
        <title>Evolutionarily conserved sperm factors, DCST1 and DCST2, are required for gamete fusion.</title>
        <authorList>
            <person name="Inoue N."/>
            <person name="Hagihara Y."/>
            <person name="Wada I."/>
        </authorList>
    </citation>
    <scope>FUNCTION</scope>
    <scope>TISSUE SPECIFICITY</scope>
    <scope>DEVELOPMENTAL STAGE</scope>
    <scope>DISRUPTION PHENOTYPE</scope>
</reference>
<reference key="3">
    <citation type="journal article" date="2022" name="Commun. Biol.">
        <title>Sperm membrane proteins DCST1 and DCST2 are required for sperm-egg interaction in mice and fish.</title>
        <authorList>
            <person name="Noda T."/>
            <person name="Blaha A."/>
            <person name="Fujihara Y."/>
            <person name="Gert K.R."/>
            <person name="Emori C."/>
            <person name="Deneke V.E."/>
            <person name="Oura S."/>
            <person name="Panser K."/>
            <person name="Lu Y."/>
            <person name="Berent S."/>
            <person name="Kodani M."/>
            <person name="Cabrera-Quio L.E."/>
            <person name="Pauli A."/>
            <person name="Ikawa M."/>
        </authorList>
    </citation>
    <scope>FUNCTION</scope>
    <scope>DISRUPTION PHENOTYPE</scope>
    <scope>INTERACTION WITH DCST1</scope>
    <scope>SUBCELLULAR LOCATION</scope>
</reference>
<keyword id="KW-0968">Cytoplasmic vesicle</keyword>
<keyword id="KW-0325">Glycoprotein</keyword>
<keyword id="KW-0472">Membrane</keyword>
<keyword id="KW-1185">Reference proteome</keyword>
<keyword id="KW-0812">Transmembrane</keyword>
<keyword id="KW-1133">Transmembrane helix</keyword>
<proteinExistence type="evidence at protein level"/>
<feature type="chain" id="PRO_0000457034" description="DC-STAMP domain-containing protein 2">
    <location>
        <begin position="1"/>
        <end position="701"/>
    </location>
</feature>
<feature type="transmembrane region" description="Helical" evidence="1">
    <location>
        <begin position="15"/>
        <end position="35"/>
    </location>
</feature>
<feature type="transmembrane region" description="Helical" evidence="1">
    <location>
        <begin position="40"/>
        <end position="60"/>
    </location>
</feature>
<feature type="transmembrane region" description="Helical" evidence="1">
    <location>
        <begin position="82"/>
        <end position="102"/>
    </location>
</feature>
<feature type="transmembrane region" description="Helical" evidence="1">
    <location>
        <begin position="215"/>
        <end position="235"/>
    </location>
</feature>
<feature type="transmembrane region" description="Helical" evidence="1">
    <location>
        <begin position="310"/>
        <end position="330"/>
    </location>
</feature>
<feature type="transmembrane region" description="Helical" evidence="1">
    <location>
        <begin position="404"/>
        <end position="424"/>
    </location>
</feature>
<feature type="transmembrane region" description="Helical" evidence="1">
    <location>
        <begin position="488"/>
        <end position="508"/>
    </location>
</feature>
<feature type="region of interest" description="Disordered" evidence="2">
    <location>
        <begin position="673"/>
        <end position="701"/>
    </location>
</feature>
<feature type="compositionally biased region" description="Basic and acidic residues" evidence="2">
    <location>
        <begin position="685"/>
        <end position="701"/>
    </location>
</feature>
<feature type="glycosylation site" description="N-linked (GlcNAc...) asparagine" evidence="1">
    <location>
        <position position="272"/>
    </location>
</feature>
<feature type="glycosylation site" description="N-linked (GlcNAc...) asparagine" evidence="1">
    <location>
        <position position="284"/>
    </location>
</feature>
<feature type="glycosylation site" description="N-linked (GlcNAc...) asparagine" evidence="1">
    <location>
        <position position="468"/>
    </location>
</feature>
<comment type="function">
    <text evidence="3 4">Essential sperm cell-surface protein required for sperm-egg fusion and fertilization.</text>
</comment>
<comment type="subunit">
    <text evidence="4">Interacts with DCST1.</text>
</comment>
<comment type="subcellular location">
    <subcellularLocation>
        <location evidence="4">Cytoplasmic vesicle</location>
        <location evidence="4">Secretory vesicle</location>
        <location evidence="4">Acrosome membrane</location>
        <topology evidence="1">Multi-pass membrane protein</topology>
    </subcellularLocation>
    <text evidence="4">Localizes in the anterior acrosome before the acrosome reaction and then translocates to the equatorial segment in acrosome-reacted sperm.</text>
</comment>
<comment type="tissue specificity">
    <text evidence="3">Expressed in testis.</text>
</comment>
<comment type="developmental stage">
    <text evidence="3">In testis, not detected before 3 weeks after birth.</text>
</comment>
<comment type="disruption phenotype">
    <text evidence="3 4">Knockout males are completely sterile despite normal mating behavior with ejaculation and vaginal plug formation (PubMed:33871360, PubMed:35393517). DCST1 and DCST2 double knockout males, but not females, are completely infertile. Mutants have no disturbances in sperm migration into the oviduct, acrosome reaction and zona penetration. Mutant spermatozoa are capable of binding to the plasma membranes of oocytes but fail to proceed to membrane fusion with oocytes (PubMed:33871360, PubMed:35393517).</text>
</comment>
<protein>
    <recommendedName>
        <fullName>DC-STAMP domain-containing protein 2</fullName>
    </recommendedName>
</protein>
<sequence>MEEGSSTARAVVRSTCGFTVGLSLATAFGLLELLGEGHSPFGCLVTTVTLAAFLSLGMGFSRQVRVSVLLLLPQAFSKQSRLLLLVASFGLVLQGPCANTLQNFTRASEAVACGAELALNQTAEMLERAKQPLISALSKIKAIAQKAKVVGDRIRKFFRSIIDAVKHIARCLQNVWYWLLHIGDMCNSELGNPYSKCTQVFDDAKIHCMKVVSGFPHLCYALLPYKLLVCGLASLVQKFCVLPSYLEFFLRTVIRTPVMKLLGKLRREFEFNMTATHYFSVDLNSSRSLSQVALDLQEAVSMKLYTAREALSLMGYTMPLLIGFLYIQALCYRYYYLNSDKFDNVYITRRFLDMEAVRSLAGMPTVLPLSSHEAKHYIQPDSMFLSQREQMFYTLEIFNLTRHLLIMLLLVFLDYGVFWLLDLARYHLQGEIVARSPVVVSISVEGSGYSGNIYRDLASAFDVMQQGNVSVLSPRCTLHPSEPDAKGYIVIGTMYGLCFFVTLFGSYVSRLRRAICASYYPSREQERITYLYNMLLSHRTNITATVQRAVRRRSADQGQMNILQVLAIRLPFLRPLLGPFSLQQSYCMGCGEPEDKGGMENFVSCSTPGCRGLYCPTCFRLLNNTCSVCSAPLSNQGHLDLELDSSDEESPQLWLAAARRKAPEQELKLRQQLQEALGTNLSDKSTSKPERAGNRNQDRKQ</sequence>
<gene>
    <name evidence="5" type="primary">Dcst2</name>
</gene>
<dbReference type="CCDS" id="CCDS89657.1"/>
<dbReference type="RefSeq" id="NP_001357782.1">
    <property type="nucleotide sequence ID" value="NM_001370853.1"/>
</dbReference>
<dbReference type="RefSeq" id="XP_006502565.1">
    <property type="nucleotide sequence ID" value="XM_006502502.3"/>
</dbReference>
<dbReference type="SMR" id="A0A140LIJ0"/>
<dbReference type="FunCoup" id="A0A140LIJ0">
    <property type="interactions" value="4"/>
</dbReference>
<dbReference type="STRING" id="10090.ENSMUSP00000146838"/>
<dbReference type="GlyGen" id="A0A140LIJ0">
    <property type="glycosylation" value="4 sites"/>
</dbReference>
<dbReference type="PhosphoSitePlus" id="A0A140LIJ0"/>
<dbReference type="ProteomicsDB" id="303659"/>
<dbReference type="Antibodypedia" id="68362">
    <property type="antibodies" value="10 antibodies from 5 providers"/>
</dbReference>
<dbReference type="Ensembl" id="ENSMUST00000208216.2">
    <property type="protein sequence ID" value="ENSMUSP00000146838.2"/>
    <property type="gene ID" value="ENSMUSG00000109293.2"/>
</dbReference>
<dbReference type="GeneID" id="329702"/>
<dbReference type="AGR" id="MGI:2685606"/>
<dbReference type="MGI" id="MGI:2685606">
    <property type="gene designation" value="Dcst2"/>
</dbReference>
<dbReference type="VEuPathDB" id="HostDB:ENSMUSG00000109293"/>
<dbReference type="GeneTree" id="ENSGT00940000153269"/>
<dbReference type="InParanoid" id="A0A140LIJ0"/>
<dbReference type="OMA" id="DAKDNCM"/>
<dbReference type="OrthoDB" id="6598372at2759"/>
<dbReference type="BioGRID-ORCS" id="329702">
    <property type="hits" value="0 hits in 32 CRISPR screens"/>
</dbReference>
<dbReference type="PRO" id="PR:A0A140LIJ0"/>
<dbReference type="Proteomes" id="UP000000589">
    <property type="component" value="Chromosome 3"/>
</dbReference>
<dbReference type="RNAct" id="A0A140LIJ0">
    <property type="molecule type" value="protein"/>
</dbReference>
<dbReference type="Bgee" id="ENSMUSG00000109293">
    <property type="expression patterns" value="Expressed in spermatid and 36 other cell types or tissues"/>
</dbReference>
<dbReference type="GO" id="GO:0002080">
    <property type="term" value="C:acrosomal membrane"/>
    <property type="evidence" value="ECO:0007669"/>
    <property type="project" value="UniProtKB-SubCell"/>
</dbReference>
<dbReference type="GO" id="GO:0007342">
    <property type="term" value="P:fusion of sperm to egg plasma membrane involved in single fertilization"/>
    <property type="evidence" value="ECO:0000315"/>
    <property type="project" value="UniProtKB"/>
</dbReference>
<dbReference type="GO" id="GO:0035036">
    <property type="term" value="P:sperm-egg recognition"/>
    <property type="evidence" value="ECO:0000315"/>
    <property type="project" value="UniProtKB"/>
</dbReference>
<dbReference type="InterPro" id="IPR051856">
    <property type="entry name" value="CSR-E3_Ligase_Protein"/>
</dbReference>
<dbReference type="InterPro" id="IPR012858">
    <property type="entry name" value="DC_STAMP-like"/>
</dbReference>
<dbReference type="PANTHER" id="PTHR21041:SF6">
    <property type="entry name" value="DC-STAMP DOMAIN-CONTAINING PROTEIN 2"/>
    <property type="match status" value="1"/>
</dbReference>
<dbReference type="PANTHER" id="PTHR21041">
    <property type="entry name" value="DENDRITIC CELL-SPECIFIC TRANSMEMBRANE PROTEIN"/>
    <property type="match status" value="1"/>
</dbReference>
<dbReference type="Pfam" id="PF07782">
    <property type="entry name" value="DC_STAMP"/>
    <property type="match status" value="1"/>
</dbReference>
<accession>A0A140LIJ0</accession>
<name>DCST2_MOUSE</name>
<organism evidence="6">
    <name type="scientific">Mus musculus</name>
    <name type="common">Mouse</name>
    <dbReference type="NCBI Taxonomy" id="10090"/>
    <lineage>
        <taxon>Eukaryota</taxon>
        <taxon>Metazoa</taxon>
        <taxon>Chordata</taxon>
        <taxon>Craniata</taxon>
        <taxon>Vertebrata</taxon>
        <taxon>Euteleostomi</taxon>
        <taxon>Mammalia</taxon>
        <taxon>Eutheria</taxon>
        <taxon>Euarchontoglires</taxon>
        <taxon>Glires</taxon>
        <taxon>Rodentia</taxon>
        <taxon>Myomorpha</taxon>
        <taxon>Muroidea</taxon>
        <taxon>Muridae</taxon>
        <taxon>Murinae</taxon>
        <taxon>Mus</taxon>
        <taxon>Mus</taxon>
    </lineage>
</organism>
<evidence type="ECO:0000255" key="1"/>
<evidence type="ECO:0000256" key="2">
    <source>
        <dbReference type="SAM" id="MobiDB-lite"/>
    </source>
</evidence>
<evidence type="ECO:0000269" key="3">
    <source>
    </source>
</evidence>
<evidence type="ECO:0000269" key="4">
    <source>
    </source>
</evidence>
<evidence type="ECO:0000312" key="5">
    <source>
        <dbReference type="MGI" id="MGI:2685606"/>
    </source>
</evidence>
<evidence type="ECO:0000312" key="6">
    <source>
        <dbReference type="Proteomes" id="UP000000589"/>
    </source>
</evidence>